<organism>
    <name type="scientific">Aster yellows witches'-broom phytoplasma (strain AYWB)</name>
    <dbReference type="NCBI Taxonomy" id="322098"/>
    <lineage>
        <taxon>Bacteria</taxon>
        <taxon>Bacillati</taxon>
        <taxon>Mycoplasmatota</taxon>
        <taxon>Mollicutes</taxon>
        <taxon>Acholeplasmatales</taxon>
        <taxon>Acholeplasmataceae</taxon>
        <taxon>Candidatus Phytoplasma</taxon>
        <taxon>16SrI (Aster yellows group)</taxon>
    </lineage>
</organism>
<dbReference type="EMBL" id="CP000061">
    <property type="protein sequence ID" value="ABC65515.1"/>
    <property type="molecule type" value="Genomic_DNA"/>
</dbReference>
<dbReference type="RefSeq" id="WP_011412679.1">
    <property type="nucleotide sequence ID" value="NC_007716.1"/>
</dbReference>
<dbReference type="SMR" id="Q2NJ78"/>
<dbReference type="STRING" id="322098.AYWB_398"/>
<dbReference type="KEGG" id="ayw:AYWB_398"/>
<dbReference type="eggNOG" id="COG0322">
    <property type="taxonomic scope" value="Bacteria"/>
</dbReference>
<dbReference type="HOGENOM" id="CLU_014841_3_2_14"/>
<dbReference type="OrthoDB" id="9804933at2"/>
<dbReference type="PhylomeDB" id="Q2NJ78"/>
<dbReference type="Proteomes" id="UP000001934">
    <property type="component" value="Chromosome"/>
</dbReference>
<dbReference type="GO" id="GO:0005737">
    <property type="term" value="C:cytoplasm"/>
    <property type="evidence" value="ECO:0007669"/>
    <property type="project" value="UniProtKB-SubCell"/>
</dbReference>
<dbReference type="GO" id="GO:0009380">
    <property type="term" value="C:excinuclease repair complex"/>
    <property type="evidence" value="ECO:0007669"/>
    <property type="project" value="InterPro"/>
</dbReference>
<dbReference type="GO" id="GO:0003677">
    <property type="term" value="F:DNA binding"/>
    <property type="evidence" value="ECO:0007669"/>
    <property type="project" value="UniProtKB-UniRule"/>
</dbReference>
<dbReference type="GO" id="GO:0009381">
    <property type="term" value="F:excinuclease ABC activity"/>
    <property type="evidence" value="ECO:0007669"/>
    <property type="project" value="UniProtKB-UniRule"/>
</dbReference>
<dbReference type="GO" id="GO:0006289">
    <property type="term" value="P:nucleotide-excision repair"/>
    <property type="evidence" value="ECO:0007669"/>
    <property type="project" value="UniProtKB-UniRule"/>
</dbReference>
<dbReference type="GO" id="GO:0009432">
    <property type="term" value="P:SOS response"/>
    <property type="evidence" value="ECO:0007669"/>
    <property type="project" value="UniProtKB-UniRule"/>
</dbReference>
<dbReference type="CDD" id="cd10434">
    <property type="entry name" value="GIY-YIG_UvrC_Cho"/>
    <property type="match status" value="1"/>
</dbReference>
<dbReference type="FunFam" id="3.40.1440.10:FF:000001">
    <property type="entry name" value="UvrABC system protein C"/>
    <property type="match status" value="1"/>
</dbReference>
<dbReference type="Gene3D" id="1.10.150.20">
    <property type="entry name" value="5' to 3' exonuclease, C-terminal subdomain"/>
    <property type="match status" value="1"/>
</dbReference>
<dbReference type="Gene3D" id="3.40.1440.10">
    <property type="entry name" value="GIY-YIG endonuclease"/>
    <property type="match status" value="1"/>
</dbReference>
<dbReference type="Gene3D" id="3.30.420.340">
    <property type="entry name" value="UvrC, RNAse H endonuclease domain"/>
    <property type="match status" value="1"/>
</dbReference>
<dbReference type="HAMAP" id="MF_00203">
    <property type="entry name" value="UvrC"/>
    <property type="match status" value="1"/>
</dbReference>
<dbReference type="InterPro" id="IPR000305">
    <property type="entry name" value="GIY-YIG_endonuc"/>
</dbReference>
<dbReference type="InterPro" id="IPR035901">
    <property type="entry name" value="GIY-YIG_endonuc_sf"/>
</dbReference>
<dbReference type="InterPro" id="IPR047296">
    <property type="entry name" value="GIY-YIG_UvrC_Cho"/>
</dbReference>
<dbReference type="InterPro" id="IPR010994">
    <property type="entry name" value="RuvA_2-like"/>
</dbReference>
<dbReference type="InterPro" id="IPR001943">
    <property type="entry name" value="UVR_dom"/>
</dbReference>
<dbReference type="InterPro" id="IPR036876">
    <property type="entry name" value="UVR_dom_sf"/>
</dbReference>
<dbReference type="InterPro" id="IPR050066">
    <property type="entry name" value="UvrABC_protein_C"/>
</dbReference>
<dbReference type="InterPro" id="IPR004791">
    <property type="entry name" value="UvrC"/>
</dbReference>
<dbReference type="InterPro" id="IPR001162">
    <property type="entry name" value="UvrC_RNase_H_dom"/>
</dbReference>
<dbReference type="InterPro" id="IPR038476">
    <property type="entry name" value="UvrC_RNase_H_dom_sf"/>
</dbReference>
<dbReference type="NCBIfam" id="TIGR00194">
    <property type="entry name" value="uvrC"/>
    <property type="match status" value="1"/>
</dbReference>
<dbReference type="PANTHER" id="PTHR30562:SF1">
    <property type="entry name" value="UVRABC SYSTEM PROTEIN C"/>
    <property type="match status" value="1"/>
</dbReference>
<dbReference type="PANTHER" id="PTHR30562">
    <property type="entry name" value="UVRC/OXIDOREDUCTASE"/>
    <property type="match status" value="1"/>
</dbReference>
<dbReference type="Pfam" id="PF01541">
    <property type="entry name" value="GIY-YIG"/>
    <property type="match status" value="1"/>
</dbReference>
<dbReference type="Pfam" id="PF22920">
    <property type="entry name" value="UvrC_RNaseH"/>
    <property type="match status" value="1"/>
</dbReference>
<dbReference type="Pfam" id="PF08459">
    <property type="entry name" value="UvrC_RNaseH_dom"/>
    <property type="match status" value="1"/>
</dbReference>
<dbReference type="SMART" id="SM00465">
    <property type="entry name" value="GIYc"/>
    <property type="match status" value="1"/>
</dbReference>
<dbReference type="SUPFAM" id="SSF46600">
    <property type="entry name" value="C-terminal UvrC-binding domain of UvrB"/>
    <property type="match status" value="1"/>
</dbReference>
<dbReference type="SUPFAM" id="SSF82771">
    <property type="entry name" value="GIY-YIG endonuclease"/>
    <property type="match status" value="1"/>
</dbReference>
<dbReference type="SUPFAM" id="SSF47781">
    <property type="entry name" value="RuvA domain 2-like"/>
    <property type="match status" value="1"/>
</dbReference>
<dbReference type="PROSITE" id="PS50164">
    <property type="entry name" value="GIY_YIG"/>
    <property type="match status" value="1"/>
</dbReference>
<dbReference type="PROSITE" id="PS50151">
    <property type="entry name" value="UVR"/>
    <property type="match status" value="1"/>
</dbReference>
<dbReference type="PROSITE" id="PS50165">
    <property type="entry name" value="UVRC"/>
    <property type="match status" value="1"/>
</dbReference>
<reference key="1">
    <citation type="journal article" date="2006" name="J. Bacteriol.">
        <title>Living with genome instability: the adaptation of phytoplasmas to diverse environments of their insect and plant hosts.</title>
        <authorList>
            <person name="Bai X."/>
            <person name="Zhang J."/>
            <person name="Ewing A."/>
            <person name="Miller S.A."/>
            <person name="Jancso Radek A."/>
            <person name="Shevchenko D.V."/>
            <person name="Tsukerman K."/>
            <person name="Walunas T."/>
            <person name="Lapidus A."/>
            <person name="Campbell J.W."/>
            <person name="Hogenhout S.A."/>
        </authorList>
    </citation>
    <scope>NUCLEOTIDE SEQUENCE [LARGE SCALE GENOMIC DNA]</scope>
    <source>
        <strain>AYWB</strain>
    </source>
</reference>
<protein>
    <recommendedName>
        <fullName evidence="1">UvrABC system protein C</fullName>
        <shortName evidence="1">Protein UvrC</shortName>
    </recommendedName>
    <alternativeName>
        <fullName evidence="1">Excinuclease ABC subunit C</fullName>
    </alternativeName>
</protein>
<sequence>MSILLEKIKTLPPNPGCYLFKNTKDTIIYVGKAKNLKKRVQSYFTKRNNLKTAMLIEETQDFFYIITNNEQEALILEANLIKTHTPKYNFKLLDDKTYPYIEITKEKHPQLKISRFKQIPPGKIIFGPYPNLKSTKETLKLLHLLYPLRRCQLASKKPCLHFHINQCLGACAGKTINYKPNIDAITKFLKGNIKDILKKLHHLMQKASEKMFYEKAQEYRDIIDSIKQTTKKQLISNQKLKNCDIFAYAFNQDQIAIQILKIRQGNIVDSYRSVFSYVGFVCENILTYLNCYYQKNIKPDIIITGKNQDENILQQTITNQTLLEQILQTKVNIYHKGDKKKLFLLALKNAQNDLSHNNLIYQSKDQKIQEALNKLAIIFNKDIKRIDVFDNSQLFGKAFVAARIVFNHFEFDKKLYRTFHIKGELPNEYQAFEETLTRCYNKGKEAENDATDLILVDGSLVQLRQSQKTLKKLGYEIPLGALQKNNKHQLTHLVTFQEKLMLEQDPNLFHFLKSLSEEVHRFAVSFHRKTKKKLDYKTTLSNIKGVGVVRKKAILNHFESLEAIKKATLQDFQKIGINQKLFLLIKKSL</sequence>
<name>UVRC_AYWBP</name>
<keyword id="KW-0963">Cytoplasm</keyword>
<keyword id="KW-0227">DNA damage</keyword>
<keyword id="KW-0228">DNA excision</keyword>
<keyword id="KW-0234">DNA repair</keyword>
<keyword id="KW-0267">Excision nuclease</keyword>
<keyword id="KW-0742">SOS response</keyword>
<accession>Q2NJ78</accession>
<evidence type="ECO:0000255" key="1">
    <source>
        <dbReference type="HAMAP-Rule" id="MF_00203"/>
    </source>
</evidence>
<feature type="chain" id="PRO_0000264866" description="UvrABC system protein C">
    <location>
        <begin position="1"/>
        <end position="589"/>
    </location>
</feature>
<feature type="domain" description="GIY-YIG" evidence="1">
    <location>
        <begin position="13"/>
        <end position="90"/>
    </location>
</feature>
<feature type="domain" description="UVR" evidence="1">
    <location>
        <begin position="194"/>
        <end position="229"/>
    </location>
</feature>
<gene>
    <name evidence="1" type="primary">uvrC</name>
    <name type="ordered locus">AYWB_398</name>
</gene>
<comment type="function">
    <text evidence="1">The UvrABC repair system catalyzes the recognition and processing of DNA lesions. UvrC both incises the 5' and 3' sides of the lesion. The N-terminal half is responsible for the 3' incision and the C-terminal half is responsible for the 5' incision.</text>
</comment>
<comment type="subunit">
    <text evidence="1">Interacts with UvrB in an incision complex.</text>
</comment>
<comment type="subcellular location">
    <subcellularLocation>
        <location evidence="1">Cytoplasm</location>
    </subcellularLocation>
</comment>
<comment type="similarity">
    <text evidence="1">Belongs to the UvrC family.</text>
</comment>
<proteinExistence type="inferred from homology"/>